<keyword id="KW-0349">Heme</keyword>
<keyword id="KW-0408">Iron</keyword>
<keyword id="KW-0472">Membrane</keyword>
<keyword id="KW-0479">Metal-binding</keyword>
<keyword id="KW-0503">Monooxygenase</keyword>
<keyword id="KW-0560">Oxidoreductase</keyword>
<keyword id="KW-0812">Transmembrane</keyword>
<keyword id="KW-1133">Transmembrane helix</keyword>
<accession>A0A2Z6FZ20</accession>
<sequence>MSFPGVIFVVSFFPLLMGIAVYRLLWHPLASFKGPKLAAVTDWWFCKKWLNGRYHQTLEKLQLQYGDVIRIAPNELVFATPEAARDIYTRCNPDQDLQFIKQPPFYKQSEGFPTLVTETDPAAHRTLRKPLERGFSPSSLKDYGRVIERVADDLTAQLEKASEHSNAVDVKAWAARFTFDVITEVTFGKSSGTVAQGKNTVWLDLLTGNIAAAAVGVAIRRQPHAVKTLLRSIFAKLSKTAKLRAQYLSVCRKMCEERLRDPPKAANLFDHVLATCPPVEKDADNHGYLVFLQGQAAALVSGGTETSSTLLSSLIYNLLAHPAHLARLQYEVRNAFSQSGEIDIESTKQLKYLQAVIDESLRIFPPVGFGLPRVCPGAMIGGVYVPKGTVVQAPDILMVRNSRYFVRPYEFLPERWLPKDHEFYDEQFSGDRKEASKPFSLGPRQCIGMSLAYAEWRIVLAKLVLKFDWEIIGETQDLMDVARLKLLWEMPPILVSFKPVGGLAAASPGA</sequence>
<name>BTCC_NEOBT</name>
<proteinExistence type="inferred from homology"/>
<evidence type="ECO:0000250" key="1">
    <source>
        <dbReference type="UniProtKB" id="P04798"/>
    </source>
</evidence>
<evidence type="ECO:0000255" key="2"/>
<evidence type="ECO:0000269" key="3">
    <source>
    </source>
</evidence>
<evidence type="ECO:0000269" key="4">
    <source ref="2"/>
</evidence>
<evidence type="ECO:0000303" key="5">
    <source>
    </source>
</evidence>
<evidence type="ECO:0000303" key="6">
    <source ref="2"/>
</evidence>
<evidence type="ECO:0000305" key="7"/>
<evidence type="ECO:0000305" key="8">
    <source ref="2"/>
</evidence>
<protein>
    <recommendedName>
        <fullName evidence="6">Cytochrome P450 monooxygenase btcC</fullName>
        <ecNumber evidence="8">1.-.-.-</ecNumber>
    </recommendedName>
    <alternativeName>
        <fullName evidence="6">Betaestacins biosynthesis cluster protein C</fullName>
    </alternativeName>
</protein>
<dbReference type="EC" id="1.-.-.-" evidence="8"/>
<dbReference type="EMBL" id="LC274619">
    <property type="protein sequence ID" value="BBE36500.1"/>
    <property type="molecule type" value="Genomic_DNA"/>
</dbReference>
<dbReference type="SMR" id="A0A2Z6FZ20"/>
<dbReference type="UniPathway" id="UPA00213"/>
<dbReference type="GO" id="GO:0016020">
    <property type="term" value="C:membrane"/>
    <property type="evidence" value="ECO:0007669"/>
    <property type="project" value="UniProtKB-SubCell"/>
</dbReference>
<dbReference type="GO" id="GO:0020037">
    <property type="term" value="F:heme binding"/>
    <property type="evidence" value="ECO:0007669"/>
    <property type="project" value="InterPro"/>
</dbReference>
<dbReference type="GO" id="GO:0005506">
    <property type="term" value="F:iron ion binding"/>
    <property type="evidence" value="ECO:0007669"/>
    <property type="project" value="InterPro"/>
</dbReference>
<dbReference type="GO" id="GO:0004497">
    <property type="term" value="F:monooxygenase activity"/>
    <property type="evidence" value="ECO:0007669"/>
    <property type="project" value="UniProtKB-KW"/>
</dbReference>
<dbReference type="GO" id="GO:0016705">
    <property type="term" value="F:oxidoreductase activity, acting on paired donors, with incorporation or reduction of molecular oxygen"/>
    <property type="evidence" value="ECO:0007669"/>
    <property type="project" value="InterPro"/>
</dbReference>
<dbReference type="GO" id="GO:0016114">
    <property type="term" value="P:terpenoid biosynthetic process"/>
    <property type="evidence" value="ECO:0007669"/>
    <property type="project" value="UniProtKB-UniPathway"/>
</dbReference>
<dbReference type="CDD" id="cd11058">
    <property type="entry name" value="CYP60B-like"/>
    <property type="match status" value="1"/>
</dbReference>
<dbReference type="Gene3D" id="1.10.630.10">
    <property type="entry name" value="Cytochrome P450"/>
    <property type="match status" value="1"/>
</dbReference>
<dbReference type="InterPro" id="IPR001128">
    <property type="entry name" value="Cyt_P450"/>
</dbReference>
<dbReference type="InterPro" id="IPR017972">
    <property type="entry name" value="Cyt_P450_CS"/>
</dbReference>
<dbReference type="InterPro" id="IPR002401">
    <property type="entry name" value="Cyt_P450_E_grp-I"/>
</dbReference>
<dbReference type="InterPro" id="IPR036396">
    <property type="entry name" value="Cyt_P450_sf"/>
</dbReference>
<dbReference type="InterPro" id="IPR050121">
    <property type="entry name" value="Cytochrome_P450_monoxygenase"/>
</dbReference>
<dbReference type="PANTHER" id="PTHR24305">
    <property type="entry name" value="CYTOCHROME P450"/>
    <property type="match status" value="1"/>
</dbReference>
<dbReference type="PANTHER" id="PTHR24305:SF210">
    <property type="entry name" value="CYTOCHROME P450 MONOOXYGENASE ASQL-RELATED"/>
    <property type="match status" value="1"/>
</dbReference>
<dbReference type="Pfam" id="PF00067">
    <property type="entry name" value="p450"/>
    <property type="match status" value="1"/>
</dbReference>
<dbReference type="PRINTS" id="PR00463">
    <property type="entry name" value="EP450I"/>
</dbReference>
<dbReference type="PRINTS" id="PR00385">
    <property type="entry name" value="P450"/>
</dbReference>
<dbReference type="SUPFAM" id="SSF48264">
    <property type="entry name" value="Cytochrome P450"/>
    <property type="match status" value="1"/>
</dbReference>
<dbReference type="PROSITE" id="PS00086">
    <property type="entry name" value="CYTOCHROME_P450"/>
    <property type="match status" value="1"/>
</dbReference>
<reference key="1">
    <citation type="journal article" date="2017" name="Org. Lett.">
        <title>Focused genome mining of structurally related sesterterpenes: enzymatic formation of enantiomeric and diastereomeric products.</title>
        <authorList>
            <person name="Narita K."/>
            <person name="Sato H."/>
            <person name="Minami A."/>
            <person name="Kudo K."/>
            <person name="Gao L."/>
            <person name="Liu C."/>
            <person name="Ozaki T."/>
            <person name="Kodama M."/>
            <person name="Lei X."/>
            <person name="Taniguchi T."/>
            <person name="Monde K."/>
            <person name="Yamazaki M."/>
            <person name="Uchiyama M."/>
            <person name="Oikawa H."/>
        </authorList>
    </citation>
    <scope>NUCLEOTIDE SEQUENCE [GENOMIC DNA]</scope>
    <source>
        <strain>PS-13</strain>
    </source>
</reference>
<reference key="2">
    <citation type="journal article" date="2018" name="Tetrahedron Lett.">
        <title>Identification of novel sesterterpenes by genome mining of phytopathogenic fungi Phoma and Colletotrichum sp.</title>
        <authorList>
            <person name="Gao L."/>
            <person name="Narita K."/>
            <person name="Ozaki T."/>
            <person name="Kamukara N."/>
            <person name="Gan P."/>
            <person name="Minami A."/>
            <person name="Liu C."/>
            <person name="Lei X."/>
            <person name="Shirasu K."/>
            <person name="Oikawa H."/>
        </authorList>
    </citation>
    <scope>FUNCTION</scope>
    <scope>PATHWAY</scope>
</reference>
<organism>
    <name type="scientific">Neocamarosporium betae</name>
    <name type="common">Beet black rot fungus</name>
    <name type="synonym">Pleospora betae</name>
    <dbReference type="NCBI Taxonomy" id="1979465"/>
    <lineage>
        <taxon>Eukaryota</taxon>
        <taxon>Fungi</taxon>
        <taxon>Dikarya</taxon>
        <taxon>Ascomycota</taxon>
        <taxon>Pezizomycotina</taxon>
        <taxon>Dothideomycetes</taxon>
        <taxon>Pleosporomycetidae</taxon>
        <taxon>Pleosporales</taxon>
        <taxon>Pleosporineae</taxon>
        <taxon>Pleosporaceae</taxon>
        <taxon>Neocamarosporium</taxon>
    </lineage>
</organism>
<gene>
    <name evidence="5" type="primary">btcC</name>
</gene>
<feature type="chain" id="PRO_0000453710" description="Cytochrome P450 monooxygenase btcC">
    <location>
        <begin position="1"/>
        <end position="510"/>
    </location>
</feature>
<feature type="transmembrane region" description="Helical" evidence="2">
    <location>
        <begin position="1"/>
        <end position="21"/>
    </location>
</feature>
<feature type="binding site" description="axial binding residue" evidence="1">
    <location>
        <position position="446"/>
    </location>
    <ligand>
        <name>heme</name>
        <dbReference type="ChEBI" id="CHEBI:30413"/>
    </ligand>
    <ligandPart>
        <name>Fe</name>
        <dbReference type="ChEBI" id="CHEBI:18248"/>
    </ligandPart>
</feature>
<comment type="function">
    <text evidence="3 4 8">Cytochrome P450 monooxygenase; part of the gene cluster that mediates the biosynthesis of betaestacins (PubMed:29185768, Ref.2). The bifunctional terpene synthase btcA converts isopentenyl diphosphate (IPP) and dimethylallyl diphosphate (DMAPP) into the sesterterpene betaestacin I (PubMed:29185768, Ref.2). The C-terminal prenyltransferase (PT) domain of btcA catalyzes formation of GFPP, whereas the N-terminal terpene cyclase (TC) domain catalyzes the cyclization of GFPP into betaestacin I (PubMed:29185768, Ref.2). The cytochrome P450 monooxygenase btcB is then responsible for the six-step oxidation of betaestacin I to yield betaestacin II (Ref.2). The roles of the cytochrome P450 monooxygenase btcC and the alpha-ketoglutarate-dependent dioxygenase btcD have not been identified yet (Probable).</text>
</comment>
<comment type="cofactor">
    <cofactor evidence="1">
        <name>heme</name>
        <dbReference type="ChEBI" id="CHEBI:30413"/>
    </cofactor>
</comment>
<comment type="pathway">
    <text evidence="8">Secondary metabolite biosynthesis; terpenoid biosynthesis.</text>
</comment>
<comment type="subcellular location">
    <subcellularLocation>
        <location evidence="2">Membrane</location>
        <topology evidence="2">Single-pass membrane protein</topology>
    </subcellularLocation>
</comment>
<comment type="similarity">
    <text evidence="7">Belongs to the cytochrome P450 family.</text>
</comment>